<comment type="function">
    <text evidence="2">Component of the ubiquinol-cytochrome c reductase complex (complex III or cytochrome b-c1 complex) that is part of the mitochondrial respiratory chain. The b-c1 complex mediates electron transfer from ubiquinol to cytochrome c. Contributes to the generation of a proton gradient across the mitochondrial membrane that is then used for ATP synthesis.</text>
</comment>
<comment type="cofactor">
    <cofactor evidence="2">
        <name>heme b</name>
        <dbReference type="ChEBI" id="CHEBI:60344"/>
    </cofactor>
    <text evidence="2">Binds 2 heme b groups non-covalently.</text>
</comment>
<comment type="subunit">
    <text evidence="2">The cytochrome bc1 complex contains 11 subunits: 3 respiratory subunits (MT-CYB, CYC1 and UQCRFS1), 2 core proteins (UQCRC1 and UQCRC2) and 6 low-molecular weight proteins (UQCRH/QCR6, UQCRB/QCR7, UQCRQ/QCR8, UQCR10/QCR9, UQCR11/QCR10 and a cleavage product of UQCRFS1). This cytochrome bc1 complex then forms a dimer.</text>
</comment>
<comment type="subcellular location">
    <subcellularLocation>
        <location evidence="2">Mitochondrion inner membrane</location>
        <topology evidence="2">Multi-pass membrane protein</topology>
    </subcellularLocation>
</comment>
<comment type="miscellaneous">
    <text evidence="1">Heme 1 (or BL or b562) is low-potential and absorbs at about 562 nm, and heme 2 (or BH or b566) is high-potential and absorbs at about 566 nm.</text>
</comment>
<comment type="similarity">
    <text evidence="3 4">Belongs to the cytochrome b family.</text>
</comment>
<comment type="caution">
    <text evidence="2">The full-length protein contains only eight transmembrane helices, not nine as predicted by bioinformatics tools.</text>
</comment>
<proteinExistence type="inferred from homology"/>
<protein>
    <recommendedName>
        <fullName>Cytochrome b</fullName>
    </recommendedName>
    <alternativeName>
        <fullName>Complex III subunit 3</fullName>
    </alternativeName>
    <alternativeName>
        <fullName>Complex III subunit III</fullName>
    </alternativeName>
    <alternativeName>
        <fullName>Cytochrome b-c1 complex subunit 3</fullName>
    </alternativeName>
    <alternativeName>
        <fullName>Ubiquinol-cytochrome-c reductase complex cytochrome b subunit</fullName>
    </alternativeName>
</protein>
<geneLocation type="mitochondrion"/>
<accession>Q36012</accession>
<accession>Q36703</accession>
<feature type="chain" id="PRO_0000061668" description="Cytochrome b">
    <location>
        <begin position="1"/>
        <end position="381"/>
    </location>
</feature>
<feature type="transmembrane region" description="Helical" evidence="2">
    <location>
        <begin position="33"/>
        <end position="53"/>
    </location>
</feature>
<feature type="transmembrane region" description="Helical" evidence="2">
    <location>
        <begin position="77"/>
        <end position="98"/>
    </location>
</feature>
<feature type="transmembrane region" description="Helical" evidence="2">
    <location>
        <begin position="113"/>
        <end position="133"/>
    </location>
</feature>
<feature type="transmembrane region" description="Helical" evidence="2">
    <location>
        <begin position="178"/>
        <end position="198"/>
    </location>
</feature>
<feature type="transmembrane region" description="Helical" evidence="2">
    <location>
        <begin position="226"/>
        <end position="246"/>
    </location>
</feature>
<feature type="transmembrane region" description="Helical" evidence="2">
    <location>
        <begin position="288"/>
        <end position="308"/>
    </location>
</feature>
<feature type="transmembrane region" description="Helical" evidence="2">
    <location>
        <begin position="320"/>
        <end position="340"/>
    </location>
</feature>
<feature type="transmembrane region" description="Helical" evidence="2">
    <location>
        <begin position="347"/>
        <end position="367"/>
    </location>
</feature>
<feature type="binding site" description="axial binding residue" evidence="2">
    <location>
        <position position="83"/>
    </location>
    <ligand>
        <name>heme b</name>
        <dbReference type="ChEBI" id="CHEBI:60344"/>
        <label>b562</label>
    </ligand>
    <ligandPart>
        <name>Fe</name>
        <dbReference type="ChEBI" id="CHEBI:18248"/>
    </ligandPart>
</feature>
<feature type="binding site" description="axial binding residue" evidence="2">
    <location>
        <position position="97"/>
    </location>
    <ligand>
        <name>heme b</name>
        <dbReference type="ChEBI" id="CHEBI:60344"/>
        <label>b566</label>
    </ligand>
    <ligandPart>
        <name>Fe</name>
        <dbReference type="ChEBI" id="CHEBI:18248"/>
    </ligandPart>
</feature>
<feature type="binding site" description="axial binding residue" evidence="2">
    <location>
        <position position="182"/>
    </location>
    <ligand>
        <name>heme b</name>
        <dbReference type="ChEBI" id="CHEBI:60344"/>
        <label>b562</label>
    </ligand>
    <ligandPart>
        <name>Fe</name>
        <dbReference type="ChEBI" id="CHEBI:18248"/>
    </ligandPart>
</feature>
<feature type="binding site" description="axial binding residue" evidence="2">
    <location>
        <position position="196"/>
    </location>
    <ligand>
        <name>heme b</name>
        <dbReference type="ChEBI" id="CHEBI:60344"/>
        <label>b566</label>
    </ligand>
    <ligandPart>
        <name>Fe</name>
        <dbReference type="ChEBI" id="CHEBI:18248"/>
    </ligandPart>
</feature>
<feature type="binding site" evidence="2">
    <location>
        <position position="201"/>
    </location>
    <ligand>
        <name>a ubiquinone</name>
        <dbReference type="ChEBI" id="CHEBI:16389"/>
    </ligand>
</feature>
<organism>
    <name type="scientific">Thylacinus cynocephalus</name>
    <name type="common">Tasmanian wolf</name>
    <dbReference type="NCBI Taxonomy" id="9275"/>
    <lineage>
        <taxon>Eukaryota</taxon>
        <taxon>Metazoa</taxon>
        <taxon>Chordata</taxon>
        <taxon>Craniata</taxon>
        <taxon>Vertebrata</taxon>
        <taxon>Euteleostomi</taxon>
        <taxon>Mammalia</taxon>
        <taxon>Metatheria</taxon>
        <taxon>Dasyuromorphia</taxon>
        <taxon>Thylacinidae</taxon>
        <taxon>Thylacinus</taxon>
    </lineage>
</organism>
<sequence length="381" mass="42649">MIIMRKTHPLLKTINHSFIDLPAPSNISAWWNFGSLLGICLVIQILTGLFLAMHYTSDTSTAFSSVAHICRDVNYGWLIRNLHANGASMFFMCLFLHVGRGIYYGSYLYKETWNIGVILLLTVMATAFVGYVLPWGQMSFWGATVITNLLSAIPYIGTTLAEWVWGGFAVDKATLTRFFAFHFILPSIVTARATVHLLFLHETGSNNPSGINPDSDKIPFHPYYTIKDALGLMLLLLPLLPLALFSPDLLGDPDNFSPANPLNTPPHIKPEWYFLFAYAILRSIPNKLGGVLALLASILILLIIPLLHTSNQRSMMFRPISQTLFWILAANLLTLTWIGGQPVEQPFIIIGQLAIILYFLLIVVLMPLAGLLENYMLEPKW</sequence>
<name>CYB_THYCY</name>
<dbReference type="EMBL" id="M99452">
    <property type="protein sequence ID" value="AAB40876.1"/>
    <property type="molecule type" value="Genomic_DNA"/>
</dbReference>
<dbReference type="PIR" id="S05196">
    <property type="entry name" value="S05196"/>
</dbReference>
<dbReference type="SMR" id="Q36012"/>
<dbReference type="GO" id="GO:0005743">
    <property type="term" value="C:mitochondrial inner membrane"/>
    <property type="evidence" value="ECO:0007669"/>
    <property type="project" value="UniProtKB-SubCell"/>
</dbReference>
<dbReference type="GO" id="GO:0045275">
    <property type="term" value="C:respiratory chain complex III"/>
    <property type="evidence" value="ECO:0007669"/>
    <property type="project" value="InterPro"/>
</dbReference>
<dbReference type="GO" id="GO:0046872">
    <property type="term" value="F:metal ion binding"/>
    <property type="evidence" value="ECO:0007669"/>
    <property type="project" value="UniProtKB-KW"/>
</dbReference>
<dbReference type="GO" id="GO:0008121">
    <property type="term" value="F:ubiquinol-cytochrome-c reductase activity"/>
    <property type="evidence" value="ECO:0007669"/>
    <property type="project" value="InterPro"/>
</dbReference>
<dbReference type="GO" id="GO:0006122">
    <property type="term" value="P:mitochondrial electron transport, ubiquinol to cytochrome c"/>
    <property type="evidence" value="ECO:0007669"/>
    <property type="project" value="TreeGrafter"/>
</dbReference>
<dbReference type="CDD" id="cd00290">
    <property type="entry name" value="cytochrome_b_C"/>
    <property type="match status" value="1"/>
</dbReference>
<dbReference type="CDD" id="cd00284">
    <property type="entry name" value="Cytochrome_b_N"/>
    <property type="match status" value="1"/>
</dbReference>
<dbReference type="FunFam" id="1.20.810.10:FF:000002">
    <property type="entry name" value="Cytochrome b"/>
    <property type="match status" value="1"/>
</dbReference>
<dbReference type="Gene3D" id="1.20.810.10">
    <property type="entry name" value="Cytochrome Bc1 Complex, Chain C"/>
    <property type="match status" value="1"/>
</dbReference>
<dbReference type="InterPro" id="IPR005798">
    <property type="entry name" value="Cyt_b/b6_C"/>
</dbReference>
<dbReference type="InterPro" id="IPR036150">
    <property type="entry name" value="Cyt_b/b6_C_sf"/>
</dbReference>
<dbReference type="InterPro" id="IPR005797">
    <property type="entry name" value="Cyt_b/b6_N"/>
</dbReference>
<dbReference type="InterPro" id="IPR027387">
    <property type="entry name" value="Cytb/b6-like_sf"/>
</dbReference>
<dbReference type="InterPro" id="IPR030689">
    <property type="entry name" value="Cytochrome_b"/>
</dbReference>
<dbReference type="InterPro" id="IPR048260">
    <property type="entry name" value="Cytochrome_b_C_euk/bac"/>
</dbReference>
<dbReference type="InterPro" id="IPR048259">
    <property type="entry name" value="Cytochrome_b_N_euk/bac"/>
</dbReference>
<dbReference type="InterPro" id="IPR016174">
    <property type="entry name" value="Di-haem_cyt_TM"/>
</dbReference>
<dbReference type="PANTHER" id="PTHR19271">
    <property type="entry name" value="CYTOCHROME B"/>
    <property type="match status" value="1"/>
</dbReference>
<dbReference type="PANTHER" id="PTHR19271:SF16">
    <property type="entry name" value="CYTOCHROME B"/>
    <property type="match status" value="1"/>
</dbReference>
<dbReference type="Pfam" id="PF00032">
    <property type="entry name" value="Cytochrom_B_C"/>
    <property type="match status" value="1"/>
</dbReference>
<dbReference type="Pfam" id="PF00033">
    <property type="entry name" value="Cytochrome_B"/>
    <property type="match status" value="1"/>
</dbReference>
<dbReference type="PIRSF" id="PIRSF038885">
    <property type="entry name" value="COB"/>
    <property type="match status" value="1"/>
</dbReference>
<dbReference type="SUPFAM" id="SSF81648">
    <property type="entry name" value="a domain/subunit of cytochrome bc1 complex (Ubiquinol-cytochrome c reductase)"/>
    <property type="match status" value="1"/>
</dbReference>
<dbReference type="SUPFAM" id="SSF81342">
    <property type="entry name" value="Transmembrane di-heme cytochromes"/>
    <property type="match status" value="1"/>
</dbReference>
<dbReference type="PROSITE" id="PS51003">
    <property type="entry name" value="CYTB_CTER"/>
    <property type="match status" value="1"/>
</dbReference>
<dbReference type="PROSITE" id="PS51002">
    <property type="entry name" value="CYTB_NTER"/>
    <property type="match status" value="1"/>
</dbReference>
<evidence type="ECO:0000250" key="1"/>
<evidence type="ECO:0000250" key="2">
    <source>
        <dbReference type="UniProtKB" id="P00157"/>
    </source>
</evidence>
<evidence type="ECO:0000255" key="3">
    <source>
        <dbReference type="PROSITE-ProRule" id="PRU00967"/>
    </source>
</evidence>
<evidence type="ECO:0000255" key="4">
    <source>
        <dbReference type="PROSITE-ProRule" id="PRU00968"/>
    </source>
</evidence>
<gene>
    <name type="primary">MT-CYB</name>
    <name type="synonym">COB</name>
    <name type="synonym">CYTB</name>
    <name type="synonym">MTCYB</name>
</gene>
<keyword id="KW-0249">Electron transport</keyword>
<keyword id="KW-0952">Extinct organism protein</keyword>
<keyword id="KW-0349">Heme</keyword>
<keyword id="KW-0408">Iron</keyword>
<keyword id="KW-0472">Membrane</keyword>
<keyword id="KW-0479">Metal-binding</keyword>
<keyword id="KW-0496">Mitochondrion</keyword>
<keyword id="KW-0999">Mitochondrion inner membrane</keyword>
<keyword id="KW-0679">Respiratory chain</keyword>
<keyword id="KW-0812">Transmembrane</keyword>
<keyword id="KW-1133">Transmembrane helix</keyword>
<keyword id="KW-0813">Transport</keyword>
<keyword id="KW-0830">Ubiquinone</keyword>
<reference key="1">
    <citation type="journal article" date="1992" name="Proc. R. Soc. B">
        <title>Phylogenetic relationships of the thylacine (Mammalia: Thylacinidae) among dasyuroid marsupials: evidence from cytochrome b DNA sequences.</title>
        <authorList>
            <person name="Krajewski C."/>
            <person name="Driskell A.C."/>
            <person name="Baverstock P.R."/>
            <person name="Braun M.J."/>
        </authorList>
    </citation>
    <scope>NUCLEOTIDE SEQUENCE [GENOMIC DNA]</scope>
</reference>
<reference key="2">
    <citation type="journal article" date="1997" name="Proc. R. Soc. B">
        <title>DNA phylogeny of the marsupial wolf resolved.</title>
        <authorList>
            <person name="Krajewski C."/>
            <person name="Buckley L."/>
            <person name="Westerman M."/>
        </authorList>
    </citation>
    <scope>NUCLEOTIDE SEQUENCE [GENOMIC DNA]</scope>
</reference>
<reference key="3">
    <citation type="journal article" date="1989" name="Nature">
        <title>DNA phylogeny of the extinct marsupial wolf.</title>
        <authorList>
            <person name="Thomas R.H."/>
            <person name="Schaffner W."/>
            <person name="Wilson A.C."/>
            <person name="Paabo S."/>
        </authorList>
    </citation>
    <scope>NUCLEOTIDE SEQUENCE [GENOMIC DNA] OF 33-70</scope>
</reference>